<comment type="function">
    <text>Sigma factors are initiation factors that promote the attachment of RNA polymerase to specific initiation sites and are then released.</text>
</comment>
<comment type="similarity">
    <text evidence="2">Belongs to the sigma-70 factor family.</text>
</comment>
<name>RPSC_NOSS1</name>
<organism>
    <name type="scientific">Nostoc sp. (strain PCC 7120 / SAG 25.82 / UTEX 2576)</name>
    <dbReference type="NCBI Taxonomy" id="103690"/>
    <lineage>
        <taxon>Bacteria</taxon>
        <taxon>Bacillati</taxon>
        <taxon>Cyanobacteriota</taxon>
        <taxon>Cyanophyceae</taxon>
        <taxon>Nostocales</taxon>
        <taxon>Nostocaceae</taxon>
        <taxon>Nostoc</taxon>
    </lineage>
</organism>
<protein>
    <recommendedName>
        <fullName>RNA polymerase sigma-C factor</fullName>
    </recommendedName>
</protein>
<proteinExistence type="inferred from homology"/>
<evidence type="ECO:0000250" key="1"/>
<evidence type="ECO:0000305" key="2"/>
<keyword id="KW-0238">DNA-binding</keyword>
<keyword id="KW-1185">Reference proteome</keyword>
<keyword id="KW-0731">Sigma factor</keyword>
<keyword id="KW-0804">Transcription</keyword>
<keyword id="KW-0805">Transcription regulation</keyword>
<sequence length="416" mass="47374">MPATSFYADAAYNTQKSRQALDPDIAIDDSDLSVDEIQELEIAAADPATFGASANRRSTDLVRLYLQEIGRVRLLGRDEEVSEAQKVQRYLKLRIVLANAVKQGDEVATPYLHLIEVQERLASELGHRPSLERWAATAGINLCDLKPILSEGKRRWAEIAKMTVEELEKMQSQGLQSKEHMIKANLRLVVSVAKKYQNRGLELLDLVQEGTLGLERAVEKFDPTKGYRFSTYAYWWIRQGITRAIATSSRTIRLPVHITEKLNKIKKAQRKIAQEKGRTPTLEDLAIELDMTPTQVREVLLRVPRSVSLETKVGKDKDTELGELLETDGVTPEEMLMRESLQRDLQHLLADLTSRERDVILMRFGLADGHPYSLAEIGRALDLSRERVRQIESKALQKLRQPKRRNLIRDYLESLS</sequence>
<feature type="chain" id="PRO_0000093936" description="RNA polymerase sigma-C factor">
    <location>
        <begin position="1"/>
        <end position="416"/>
    </location>
</feature>
<feature type="DNA-binding region" description="H-T-H motif" evidence="1">
    <location>
        <begin position="374"/>
        <end position="393"/>
    </location>
</feature>
<feature type="short sequence motif" description="Polymerase core binding">
    <location>
        <begin position="205"/>
        <end position="218"/>
    </location>
</feature>
<feature type="sequence conflict" description="In Ref. 1; AAA22047." evidence="2" ref="1">
    <original>A</original>
    <variation>R</variation>
    <location>
        <position position="52"/>
    </location>
</feature>
<accession>Q03066</accession>
<gene>
    <name type="primary">sigC</name>
    <name type="ordered locus">all1692</name>
</gene>
<reference key="1">
    <citation type="journal article" date="1992" name="J. Bacteriol.">
        <title>Identification of multiple RNA polymerase sigma factor homologs in the cyanobacterium Anabaena sp. strain PCC 7120: cloning, expression, and inactivation of the sigB and sigC genes.</title>
        <authorList>
            <person name="Brahamsha B."/>
            <person name="Haselkorn R."/>
        </authorList>
    </citation>
    <scope>NUCLEOTIDE SEQUENCE [GENOMIC DNA]</scope>
</reference>
<reference key="2">
    <citation type="journal article" date="2001" name="DNA Res.">
        <title>Complete genomic sequence of the filamentous nitrogen-fixing cyanobacterium Anabaena sp. strain PCC 7120.</title>
        <authorList>
            <person name="Kaneko T."/>
            <person name="Nakamura Y."/>
            <person name="Wolk C.P."/>
            <person name="Kuritz T."/>
            <person name="Sasamoto S."/>
            <person name="Watanabe A."/>
            <person name="Iriguchi M."/>
            <person name="Ishikawa A."/>
            <person name="Kawashima K."/>
            <person name="Kimura T."/>
            <person name="Kishida Y."/>
            <person name="Kohara M."/>
            <person name="Matsumoto M."/>
            <person name="Matsuno A."/>
            <person name="Muraki A."/>
            <person name="Nakazaki N."/>
            <person name="Shimpo S."/>
            <person name="Sugimoto M."/>
            <person name="Takazawa M."/>
            <person name="Yamada M."/>
            <person name="Yasuda M."/>
            <person name="Tabata S."/>
        </authorList>
    </citation>
    <scope>NUCLEOTIDE SEQUENCE [LARGE SCALE GENOMIC DNA]</scope>
    <source>
        <strain>PCC 7120 / SAG 25.82 / UTEX 2576</strain>
    </source>
</reference>
<dbReference type="EMBL" id="M95759">
    <property type="protein sequence ID" value="AAA22047.1"/>
    <property type="molecule type" value="Genomic_DNA"/>
</dbReference>
<dbReference type="EMBL" id="BA000019">
    <property type="protein sequence ID" value="BAB78058.1"/>
    <property type="molecule type" value="Genomic_DNA"/>
</dbReference>
<dbReference type="PIR" id="AF2017">
    <property type="entry name" value="AF2017"/>
</dbReference>
<dbReference type="PIR" id="C47017">
    <property type="entry name" value="C47017"/>
</dbReference>
<dbReference type="RefSeq" id="WP_010995861.1">
    <property type="nucleotide sequence ID" value="NZ_RSCN01000013.1"/>
</dbReference>
<dbReference type="SMR" id="Q03066"/>
<dbReference type="STRING" id="103690.gene:10493709"/>
<dbReference type="KEGG" id="ana:all1692"/>
<dbReference type="eggNOG" id="COG0568">
    <property type="taxonomic scope" value="Bacteria"/>
</dbReference>
<dbReference type="OrthoDB" id="1185556at2"/>
<dbReference type="Proteomes" id="UP000002483">
    <property type="component" value="Chromosome"/>
</dbReference>
<dbReference type="GO" id="GO:0003677">
    <property type="term" value="F:DNA binding"/>
    <property type="evidence" value="ECO:0007669"/>
    <property type="project" value="UniProtKB-KW"/>
</dbReference>
<dbReference type="GO" id="GO:0016987">
    <property type="term" value="F:sigma factor activity"/>
    <property type="evidence" value="ECO:0007669"/>
    <property type="project" value="UniProtKB-KW"/>
</dbReference>
<dbReference type="GO" id="GO:0006352">
    <property type="term" value="P:DNA-templated transcription initiation"/>
    <property type="evidence" value="ECO:0007669"/>
    <property type="project" value="InterPro"/>
</dbReference>
<dbReference type="CDD" id="cd06171">
    <property type="entry name" value="Sigma70_r4"/>
    <property type="match status" value="1"/>
</dbReference>
<dbReference type="FunFam" id="1.10.601.10:FF:000001">
    <property type="entry name" value="RNA polymerase sigma factor SigA"/>
    <property type="match status" value="1"/>
</dbReference>
<dbReference type="Gene3D" id="1.10.601.10">
    <property type="entry name" value="RNA Polymerase Primary Sigma Factor"/>
    <property type="match status" value="2"/>
</dbReference>
<dbReference type="Gene3D" id="1.10.10.10">
    <property type="entry name" value="Winged helix-like DNA-binding domain superfamily/Winged helix DNA-binding domain"/>
    <property type="match status" value="2"/>
</dbReference>
<dbReference type="InterPro" id="IPR014284">
    <property type="entry name" value="RNA_pol_sigma-70_dom"/>
</dbReference>
<dbReference type="InterPro" id="IPR000943">
    <property type="entry name" value="RNA_pol_sigma70"/>
</dbReference>
<dbReference type="InterPro" id="IPR009042">
    <property type="entry name" value="RNA_pol_sigma70_r1_2"/>
</dbReference>
<dbReference type="InterPro" id="IPR007627">
    <property type="entry name" value="RNA_pol_sigma70_r2"/>
</dbReference>
<dbReference type="InterPro" id="IPR007624">
    <property type="entry name" value="RNA_pol_sigma70_r3"/>
</dbReference>
<dbReference type="InterPro" id="IPR007630">
    <property type="entry name" value="RNA_pol_sigma70_r4"/>
</dbReference>
<dbReference type="InterPro" id="IPR013325">
    <property type="entry name" value="RNA_pol_sigma_r2"/>
</dbReference>
<dbReference type="InterPro" id="IPR013324">
    <property type="entry name" value="RNA_pol_sigma_r3/r4-like"/>
</dbReference>
<dbReference type="InterPro" id="IPR017848">
    <property type="entry name" value="RNA_pol_sigma_RpoD/SigA_cyanob"/>
</dbReference>
<dbReference type="InterPro" id="IPR050239">
    <property type="entry name" value="Sigma-70_RNA_pol_init_factors"/>
</dbReference>
<dbReference type="InterPro" id="IPR036388">
    <property type="entry name" value="WH-like_DNA-bd_sf"/>
</dbReference>
<dbReference type="NCBIfam" id="NF005785">
    <property type="entry name" value="PRK07598.1"/>
    <property type="match status" value="1"/>
</dbReference>
<dbReference type="NCBIfam" id="TIGR02997">
    <property type="entry name" value="Sig70-cyanoRpoD"/>
    <property type="match status" value="1"/>
</dbReference>
<dbReference type="NCBIfam" id="TIGR02937">
    <property type="entry name" value="sigma70-ECF"/>
    <property type="match status" value="1"/>
</dbReference>
<dbReference type="PANTHER" id="PTHR30603">
    <property type="entry name" value="RNA POLYMERASE SIGMA FACTOR RPO"/>
    <property type="match status" value="1"/>
</dbReference>
<dbReference type="PANTHER" id="PTHR30603:SF60">
    <property type="entry name" value="RNA POLYMERASE SIGMA FACTOR RPOD"/>
    <property type="match status" value="1"/>
</dbReference>
<dbReference type="Pfam" id="PF00140">
    <property type="entry name" value="Sigma70_r1_2"/>
    <property type="match status" value="1"/>
</dbReference>
<dbReference type="Pfam" id="PF04542">
    <property type="entry name" value="Sigma70_r2"/>
    <property type="match status" value="1"/>
</dbReference>
<dbReference type="Pfam" id="PF04539">
    <property type="entry name" value="Sigma70_r3"/>
    <property type="match status" value="1"/>
</dbReference>
<dbReference type="Pfam" id="PF04545">
    <property type="entry name" value="Sigma70_r4"/>
    <property type="match status" value="1"/>
</dbReference>
<dbReference type="PRINTS" id="PR00046">
    <property type="entry name" value="SIGMA70FCT"/>
</dbReference>
<dbReference type="SUPFAM" id="SSF88946">
    <property type="entry name" value="Sigma2 domain of RNA polymerase sigma factors"/>
    <property type="match status" value="1"/>
</dbReference>
<dbReference type="SUPFAM" id="SSF88659">
    <property type="entry name" value="Sigma3 and sigma4 domains of RNA polymerase sigma factors"/>
    <property type="match status" value="2"/>
</dbReference>
<dbReference type="PROSITE" id="PS00715">
    <property type="entry name" value="SIGMA70_1"/>
    <property type="match status" value="1"/>
</dbReference>
<dbReference type="PROSITE" id="PS00716">
    <property type="entry name" value="SIGMA70_2"/>
    <property type="match status" value="1"/>
</dbReference>